<sequence length="74" mass="8561">MKTQIVILFISMIMLQMFVQIEGGFWGSLWEGVKSVVGKRGLRNLDDLDDLDLDHLFDSDVSDADLRLLKQMFR</sequence>
<reference key="1">
    <citation type="journal article" date="2010" name="Peptides">
        <title>Cloning and functional characterization of a new antimicrobial peptide gene StCT1 from the venom of the scorpion Scorpiops tibetanus.</title>
        <authorList>
            <person name="Yuan W."/>
            <person name="Cao L."/>
            <person name="Ma Y."/>
            <person name="Mao P."/>
            <person name="Wang W."/>
            <person name="Zhao R."/>
            <person name="Wu Y."/>
            <person name="Cao Z."/>
            <person name="Li W."/>
        </authorList>
    </citation>
    <scope>NUCLEOTIDE SEQUENCE [MRNA]</scope>
    <scope>AMIDATION AT VAL-37</scope>
    <scope>FUNCTION</scope>
    <source>
        <tissue>Venom gland</tissue>
    </source>
</reference>
<reference key="2">
    <citation type="journal article" date="2013" name="Peptides">
        <title>Three new antimicrobial peptides from the scorpion Pandinus imperator.</title>
        <authorList>
            <person name="Zeng X.C."/>
            <person name="Zhou L."/>
            <person name="Shi W."/>
            <person name="Luo X."/>
            <person name="Zhang L."/>
            <person name="Nie Y."/>
            <person name="Wang J."/>
            <person name="Wu S."/>
            <person name="Cao B."/>
            <person name="Cao H."/>
        </authorList>
    </citation>
    <scope>NOMENCLATURE</scope>
</reference>
<reference key="3">
    <citation type="journal article" date="2014" name="Peptides">
        <title>Scorpion venom peptides with no disulfide bridges: a review.</title>
        <authorList>
            <person name="Almaaytah A."/>
            <person name="Albalas Q."/>
        </authorList>
    </citation>
    <scope>NOMENCLATURE</scope>
</reference>
<keyword id="KW-0027">Amidation</keyword>
<keyword id="KW-0044">Antibiotic</keyword>
<keyword id="KW-0929">Antimicrobial</keyword>
<keyword id="KW-0165">Cleavage on pair of basic residues</keyword>
<keyword id="KW-0204">Cytolysis</keyword>
<keyword id="KW-0354">Hemolysis</keyword>
<keyword id="KW-0472">Membrane</keyword>
<keyword id="KW-0964">Secreted</keyword>
<keyword id="KW-0732">Signal</keyword>
<keyword id="KW-1052">Target cell membrane</keyword>
<keyword id="KW-1053">Target membrane</keyword>
<keyword id="KW-0812">Transmembrane</keyword>
<organism>
    <name type="scientific">Scorpiops tibetanus</name>
    <name type="common">Scorpion</name>
    <dbReference type="NCBI Taxonomy" id="500600"/>
    <lineage>
        <taxon>Eukaryota</taxon>
        <taxon>Metazoa</taxon>
        <taxon>Ecdysozoa</taxon>
        <taxon>Arthropoda</taxon>
        <taxon>Chelicerata</taxon>
        <taxon>Arachnida</taxon>
        <taxon>Scorpiones</taxon>
        <taxon>Iurida</taxon>
        <taxon>Chactoidea</taxon>
        <taxon>Euscorpiidae</taxon>
        <taxon>Scorpiopinae</taxon>
        <taxon>Scorpiopini</taxon>
        <taxon>Scorpiops</taxon>
    </lineage>
</organism>
<proteinExistence type="evidence at protein level"/>
<name>NDB48_SCOTI</name>
<comment type="function">
    <text evidence="3">Antimicrobial peptide that is rapidly bactericidal against Gram-positive bacteria (MIC=12.5 ug/ml against S.aureus, and MIC=100 ug/ml against M.luteus). Is also active against clinical antibiotics-resistant bacterial strains.</text>
</comment>
<comment type="subcellular location">
    <subcellularLocation>
        <location evidence="1">Secreted</location>
    </subcellularLocation>
    <subcellularLocation>
        <location evidence="1">Target cell membrane</location>
    </subcellularLocation>
    <text evidence="1">Forms a helical membrane channel in the prey.</text>
</comment>
<comment type="tissue specificity">
    <text>Expressed by the venom gland.</text>
</comment>
<comment type="miscellaneous">
    <text evidence="8">Is highly capable of inhibiting antibiotic-resistant pathogen growth, including methicillin-resistant S.aureus. In vivo, shows high antimicrobial activity on a S.aureus-infected mouse model (PubMed:19854232).</text>
</comment>
<comment type="similarity">
    <text evidence="7">Belongs to the non-disulfide-bridged peptide (NDBP) superfamily. Short antimicrobial peptide (group 4) family.</text>
</comment>
<accession>P0DJO3</accession>
<dbReference type="EMBL" id="FD664386">
    <property type="status" value="NOT_ANNOTATED_CDS"/>
    <property type="molecule type" value="mRNA"/>
</dbReference>
<dbReference type="SMR" id="P0DJO3"/>
<dbReference type="GO" id="GO:0005576">
    <property type="term" value="C:extracellular region"/>
    <property type="evidence" value="ECO:0007669"/>
    <property type="project" value="UniProtKB-SubCell"/>
</dbReference>
<dbReference type="GO" id="GO:0016020">
    <property type="term" value="C:membrane"/>
    <property type="evidence" value="ECO:0007669"/>
    <property type="project" value="UniProtKB-KW"/>
</dbReference>
<dbReference type="GO" id="GO:0044218">
    <property type="term" value="C:other organism cell membrane"/>
    <property type="evidence" value="ECO:0007669"/>
    <property type="project" value="UniProtKB-KW"/>
</dbReference>
<dbReference type="GO" id="GO:0042742">
    <property type="term" value="P:defense response to bacterium"/>
    <property type="evidence" value="ECO:0007669"/>
    <property type="project" value="UniProtKB-KW"/>
</dbReference>
<dbReference type="GO" id="GO:0031640">
    <property type="term" value="P:killing of cells of another organism"/>
    <property type="evidence" value="ECO:0007669"/>
    <property type="project" value="UniProtKB-KW"/>
</dbReference>
<evidence type="ECO:0000250" key="1"/>
<evidence type="ECO:0000255" key="2"/>
<evidence type="ECO:0000269" key="3">
    <source>
    </source>
</evidence>
<evidence type="ECO:0000303" key="4">
    <source>
    </source>
</evidence>
<evidence type="ECO:0000303" key="5">
    <source>
    </source>
</evidence>
<evidence type="ECO:0000303" key="6">
    <source>
    </source>
</evidence>
<evidence type="ECO:0000305" key="7"/>
<evidence type="ECO:0000305" key="8">
    <source>
    </source>
</evidence>
<feature type="signal peptide" evidence="2">
    <location>
        <begin position="1"/>
        <end position="23"/>
    </location>
</feature>
<feature type="peptide" id="PRO_0000418785" description="Amphipathic peptide CT1">
    <location>
        <begin position="24"/>
        <end position="37"/>
    </location>
</feature>
<feature type="propeptide" id="PRO_0000418786" evidence="1">
    <location>
        <begin position="41"/>
        <end position="74"/>
    </location>
</feature>
<feature type="modified residue" description="Valine amide" evidence="3">
    <location>
        <position position="37"/>
    </location>
</feature>
<protein>
    <recommendedName>
        <fullName evidence="4">Amphipathic peptide CT1</fullName>
        <shortName evidence="4">StCT1</shortName>
    </recommendedName>
    <alternativeName>
        <fullName evidence="6">Non-disulfide-bridged peptide 4.8</fullName>
        <shortName evidence="6">NDBP-4.8</shortName>
    </alternativeName>
    <alternativeName>
        <fullName evidence="5">Non-disulfide-bridged peptide 5.16</fullName>
        <shortName evidence="5">NDBP-5.16</shortName>
    </alternativeName>
</protein>